<organism>
    <name type="scientific">Trieres chinensis</name>
    <name type="common">Marine centric diatom</name>
    <name type="synonym">Odontella sinensis</name>
    <dbReference type="NCBI Taxonomy" id="1514140"/>
    <lineage>
        <taxon>Eukaryota</taxon>
        <taxon>Sar</taxon>
        <taxon>Stramenopiles</taxon>
        <taxon>Ochrophyta</taxon>
        <taxon>Bacillariophyta</taxon>
        <taxon>Mediophyceae</taxon>
        <taxon>Biddulphiophycidae</taxon>
        <taxon>Eupodiscales</taxon>
        <taxon>Parodontellaceae</taxon>
        <taxon>Trieres</taxon>
    </lineage>
</organism>
<geneLocation type="chloroplast"/>
<name>YCF39_TRICV</name>
<feature type="chain" id="PRO_0000204557" description="Photosystem II assembly factor Ycf39">
    <location>
        <begin position="1"/>
        <end position="319"/>
    </location>
</feature>
<protein>
    <recommendedName>
        <fullName evidence="2">Photosystem II assembly factor Ycf39</fullName>
        <ecNumber>1.-.-.-</ecNumber>
    </recommendedName>
    <alternativeName>
        <fullName>ORF319</fullName>
    </alternativeName>
</protein>
<comment type="function">
    <text evidence="1">Involved in assembly of photosystem II.</text>
</comment>
<comment type="subcellular location">
    <subcellularLocation>
        <location>Plastid</location>
        <location>Chloroplast</location>
    </subcellularLocation>
</comment>
<comment type="similarity">
    <text evidence="2">Belongs to the NmrA-type oxidoreductase family. Ycf39 subfamily.</text>
</comment>
<accession>P49534</accession>
<gene>
    <name type="primary">ycf39</name>
</gene>
<dbReference type="EC" id="1.-.-.-"/>
<dbReference type="EMBL" id="Z67753">
    <property type="protein sequence ID" value="CAA91705.1"/>
    <property type="molecule type" value="Genomic_DNA"/>
</dbReference>
<dbReference type="PIR" id="S78332">
    <property type="entry name" value="S78332"/>
</dbReference>
<dbReference type="RefSeq" id="NP_043673.1">
    <property type="nucleotide sequence ID" value="NC_001713.1"/>
</dbReference>
<dbReference type="SMR" id="P49534"/>
<dbReference type="GeneID" id="801778"/>
<dbReference type="GO" id="GO:0009507">
    <property type="term" value="C:chloroplast"/>
    <property type="evidence" value="ECO:0007669"/>
    <property type="project" value="UniProtKB-SubCell"/>
</dbReference>
<dbReference type="GO" id="GO:0009523">
    <property type="term" value="C:photosystem II"/>
    <property type="evidence" value="ECO:0007669"/>
    <property type="project" value="UniProtKB-KW"/>
</dbReference>
<dbReference type="GO" id="GO:0016491">
    <property type="term" value="F:oxidoreductase activity"/>
    <property type="evidence" value="ECO:0007669"/>
    <property type="project" value="UniProtKB-KW"/>
</dbReference>
<dbReference type="GO" id="GO:0015979">
    <property type="term" value="P:photosynthesis"/>
    <property type="evidence" value="ECO:0007669"/>
    <property type="project" value="UniProtKB-KW"/>
</dbReference>
<dbReference type="CDD" id="cd05243">
    <property type="entry name" value="SDR_a5"/>
    <property type="match status" value="1"/>
</dbReference>
<dbReference type="Gene3D" id="3.40.50.720">
    <property type="entry name" value="NAD(P)-binding Rossmann-like Domain"/>
    <property type="match status" value="1"/>
</dbReference>
<dbReference type="InterPro" id="IPR044256">
    <property type="entry name" value="HCF244-like"/>
</dbReference>
<dbReference type="InterPro" id="IPR036291">
    <property type="entry name" value="NAD(P)-bd_dom_sf"/>
</dbReference>
<dbReference type="InterPro" id="IPR008030">
    <property type="entry name" value="NmrA-like"/>
</dbReference>
<dbReference type="PANTHER" id="PTHR47128">
    <property type="match status" value="1"/>
</dbReference>
<dbReference type="PANTHER" id="PTHR47128:SF2">
    <property type="entry name" value="PROTEIN HIGH CHLOROPHYLL FLUORESCENCE PHENOTYPE 244, CHLOROPLASTIC"/>
    <property type="match status" value="1"/>
</dbReference>
<dbReference type="Pfam" id="PF05368">
    <property type="entry name" value="NmrA"/>
    <property type="match status" value="1"/>
</dbReference>
<dbReference type="SUPFAM" id="SSF51735">
    <property type="entry name" value="NAD(P)-binding Rossmann-fold domains"/>
    <property type="match status" value="1"/>
</dbReference>
<evidence type="ECO:0000250" key="1">
    <source>
        <dbReference type="UniProtKB" id="P74429"/>
    </source>
</evidence>
<evidence type="ECO:0000305" key="2"/>
<keyword id="KW-0150">Chloroplast</keyword>
<keyword id="KW-0560">Oxidoreductase</keyword>
<keyword id="KW-0602">Photosynthesis</keyword>
<keyword id="KW-0604">Photosystem II</keyword>
<keyword id="KW-0934">Plastid</keyword>
<sequence length="319" mass="36343">MSLLIIGGTGTLGRQVVLQALTKGYQVRCLVRNFRKANFLKEWGAELIYGDLSRPETIPPCLQGITAVIDTSTSRPSDLDTLKQVDWDGKCALIEAAQAANVKHFVFCSSQNVEQFLNIPLMEMKFGIETKLQQSNIPYTVFRLAGFYQGLIEQYAIPVLENLPILVTNENTCVSYMDTQDIAKFCLRSLQLPETKNRTFVLGGQKGWVSSEIINLCEQLAGQSAKVNKIPLFLLKLVSQIFGFFEWGQNISDRLAFAEILNVENDFSKSTFDLYKTFKVDDSEITQLDDYFLEYFIRLLKRLRDINFEDIQKQKNLII</sequence>
<reference key="1">
    <citation type="journal article" date="1995" name="Plant Mol. Biol. Rep.">
        <title>The chloroplast genome of a chlorophyll a+c-containing alga, Odontella sinensis.</title>
        <authorList>
            <person name="Kowallik K.V."/>
            <person name="Stoebe B."/>
            <person name="Schaffran I."/>
            <person name="Kroth-Pancic P."/>
            <person name="Freier U."/>
        </authorList>
    </citation>
    <scope>NUCLEOTIDE SEQUENCE [LARGE SCALE GENOMIC DNA]</scope>
</reference>
<proteinExistence type="inferred from homology"/>